<dbReference type="EMBL" id="U21725">
    <property type="protein sequence ID" value="AAA75032.1"/>
    <property type="molecule type" value="mRNA"/>
</dbReference>
<dbReference type="RefSeq" id="XP_002671077.1">
    <property type="nucleotide sequence ID" value="XM_002671031.1"/>
</dbReference>
<dbReference type="SMR" id="P53441"/>
<dbReference type="KEGG" id="ngr:NAEGRDRAFT_56351"/>
<dbReference type="VEuPathDB" id="AmoebaDB:NAEGRDRAFT_56351"/>
<dbReference type="eggNOG" id="KOG0028">
    <property type="taxonomic scope" value="Eukaryota"/>
</dbReference>
<dbReference type="OMA" id="HPGLTQQ"/>
<dbReference type="OrthoDB" id="26525at2759"/>
<dbReference type="GO" id="GO:0005813">
    <property type="term" value="C:centrosome"/>
    <property type="evidence" value="ECO:0007669"/>
    <property type="project" value="UniProtKB-SubCell"/>
</dbReference>
<dbReference type="GO" id="GO:0005737">
    <property type="term" value="C:cytoplasm"/>
    <property type="evidence" value="ECO:0007669"/>
    <property type="project" value="UniProtKB-KW"/>
</dbReference>
<dbReference type="GO" id="GO:0016460">
    <property type="term" value="C:myosin II complex"/>
    <property type="evidence" value="ECO:0007669"/>
    <property type="project" value="TreeGrafter"/>
</dbReference>
<dbReference type="GO" id="GO:0005509">
    <property type="term" value="F:calcium ion binding"/>
    <property type="evidence" value="ECO:0007669"/>
    <property type="project" value="InterPro"/>
</dbReference>
<dbReference type="GO" id="GO:0051301">
    <property type="term" value="P:cell division"/>
    <property type="evidence" value="ECO:0007669"/>
    <property type="project" value="UniProtKB-KW"/>
</dbReference>
<dbReference type="CDD" id="cd00051">
    <property type="entry name" value="EFh"/>
    <property type="match status" value="2"/>
</dbReference>
<dbReference type="FunFam" id="1.10.238.10:FF:000077">
    <property type="entry name" value="Centrin 1"/>
    <property type="match status" value="1"/>
</dbReference>
<dbReference type="FunFam" id="1.10.238.10:FF:000070">
    <property type="entry name" value="Centrin-1"/>
    <property type="match status" value="1"/>
</dbReference>
<dbReference type="Gene3D" id="1.10.238.10">
    <property type="entry name" value="EF-hand"/>
    <property type="match status" value="2"/>
</dbReference>
<dbReference type="InterPro" id="IPR050230">
    <property type="entry name" value="CALM/Myosin/TropC-like"/>
</dbReference>
<dbReference type="InterPro" id="IPR011992">
    <property type="entry name" value="EF-hand-dom_pair"/>
</dbReference>
<dbReference type="InterPro" id="IPR018247">
    <property type="entry name" value="EF_Hand_1_Ca_BS"/>
</dbReference>
<dbReference type="InterPro" id="IPR002048">
    <property type="entry name" value="EF_hand_dom"/>
</dbReference>
<dbReference type="PANTHER" id="PTHR23048:SF59">
    <property type="entry name" value="EF-HAND SUPERFAMILY PROTEIN"/>
    <property type="match status" value="1"/>
</dbReference>
<dbReference type="PANTHER" id="PTHR23048">
    <property type="entry name" value="MYOSIN LIGHT CHAIN 1, 3"/>
    <property type="match status" value="1"/>
</dbReference>
<dbReference type="Pfam" id="PF13499">
    <property type="entry name" value="EF-hand_7"/>
    <property type="match status" value="2"/>
</dbReference>
<dbReference type="SMART" id="SM00054">
    <property type="entry name" value="EFh"/>
    <property type="match status" value="4"/>
</dbReference>
<dbReference type="SUPFAM" id="SSF47473">
    <property type="entry name" value="EF-hand"/>
    <property type="match status" value="1"/>
</dbReference>
<dbReference type="PROSITE" id="PS00018">
    <property type="entry name" value="EF_HAND_1"/>
    <property type="match status" value="1"/>
</dbReference>
<dbReference type="PROSITE" id="PS50222">
    <property type="entry name" value="EF_HAND_2"/>
    <property type="match status" value="4"/>
</dbReference>
<protein>
    <recommendedName>
        <fullName>Caltractin</fullName>
    </recommendedName>
    <alternativeName>
        <fullName>Centrin</fullName>
    </alternativeName>
</protein>
<name>CATR_NAEGR</name>
<comment type="function">
    <text>Plays a fundamental role in microtubule-organizing center structure and function.</text>
</comment>
<comment type="subunit">
    <text evidence="1">Monomer.</text>
</comment>
<comment type="subcellular location">
    <subcellularLocation>
        <location>Cytoplasm</location>
        <location>Cytoskeleton</location>
        <location>Microtubule organizing center</location>
        <location>Centrosome</location>
    </subcellularLocation>
    <text>Centrosome of interphase and mitotic cells.</text>
</comment>
<comment type="miscellaneous">
    <text evidence="1">Binds two moles of calcium per mole of protein.</text>
</comment>
<comment type="similarity">
    <text evidence="4">Belongs to the centrin family.</text>
</comment>
<proteinExistence type="evidence at transcript level"/>
<accession>P53441</accession>
<gene>
    <name type="primary">CTN</name>
</gene>
<evidence type="ECO:0000250" key="1"/>
<evidence type="ECO:0000255" key="2">
    <source>
        <dbReference type="PROSITE-ProRule" id="PRU00448"/>
    </source>
</evidence>
<evidence type="ECO:0000256" key="3">
    <source>
        <dbReference type="SAM" id="MobiDB-lite"/>
    </source>
</evidence>
<evidence type="ECO:0000305" key="4"/>
<reference key="1">
    <citation type="journal article" date="1996" name="Cell Motil. Cytoskeleton">
        <title>Centrin is a conserved protein that forms diverse associations with centrioles and MTOCs in Naegleria and other organisms.</title>
        <authorList>
            <person name="Levy Y.Y."/>
            <person name="Lai E.Y."/>
            <person name="Remillard S.P."/>
            <person name="Heintzelman M.B."/>
            <person name="Fulton C."/>
        </authorList>
    </citation>
    <scope>NUCLEOTIDE SEQUENCE [MRNA]</scope>
    <source>
        <strain>ATCC 30223 / NEG</strain>
    </source>
</reference>
<feature type="chain" id="PRO_0000073566" description="Caltractin">
    <location>
        <begin position="1"/>
        <end position="172"/>
    </location>
</feature>
<feature type="domain" description="EF-hand 1" evidence="2">
    <location>
        <begin position="29"/>
        <end position="64"/>
    </location>
</feature>
<feature type="domain" description="EF-hand 2" evidence="2">
    <location>
        <begin position="65"/>
        <end position="99"/>
    </location>
</feature>
<feature type="domain" description="EF-hand 3" evidence="2">
    <location>
        <begin position="101"/>
        <end position="136"/>
    </location>
</feature>
<feature type="domain" description="EF-hand 4" evidence="2">
    <location>
        <begin position="137"/>
        <end position="172"/>
    </location>
</feature>
<feature type="region of interest" description="Disordered" evidence="3">
    <location>
        <begin position="1"/>
        <end position="23"/>
    </location>
</feature>
<feature type="compositionally biased region" description="Polar residues" evidence="3">
    <location>
        <begin position="12"/>
        <end position="21"/>
    </location>
</feature>
<feature type="binding site" evidence="2">
    <location>
        <position position="42"/>
    </location>
    <ligand>
        <name>Ca(2+)</name>
        <dbReference type="ChEBI" id="CHEBI:29108"/>
    </ligand>
</feature>
<feature type="binding site" evidence="2">
    <location>
        <position position="44"/>
    </location>
    <ligand>
        <name>Ca(2+)</name>
        <dbReference type="ChEBI" id="CHEBI:29108"/>
    </ligand>
</feature>
<feature type="binding site" evidence="2">
    <location>
        <position position="46"/>
    </location>
    <ligand>
        <name>Ca(2+)</name>
        <dbReference type="ChEBI" id="CHEBI:29108"/>
    </ligand>
</feature>
<feature type="binding site" evidence="2">
    <location>
        <position position="48"/>
    </location>
    <ligand>
        <name>Ca(2+)</name>
        <dbReference type="ChEBI" id="CHEBI:29108"/>
    </ligand>
</feature>
<feature type="binding site" evidence="2">
    <location>
        <position position="53"/>
    </location>
    <ligand>
        <name>Ca(2+)</name>
        <dbReference type="ChEBI" id="CHEBI:29108"/>
    </ligand>
</feature>
<organism>
    <name type="scientific">Naegleria gruberi</name>
    <name type="common">Amoeba</name>
    <dbReference type="NCBI Taxonomy" id="5762"/>
    <lineage>
        <taxon>Eukaryota</taxon>
        <taxon>Discoba</taxon>
        <taxon>Heterolobosea</taxon>
        <taxon>Tetramitia</taxon>
        <taxon>Eutetramitia</taxon>
        <taxon>Vahlkampfiidae</taxon>
        <taxon>Naegleria</taxon>
    </lineage>
</organism>
<keyword id="KW-0106">Calcium</keyword>
<keyword id="KW-0131">Cell cycle</keyword>
<keyword id="KW-0132">Cell division</keyword>
<keyword id="KW-0963">Cytoplasm</keyword>
<keyword id="KW-0206">Cytoskeleton</keyword>
<keyword id="KW-0479">Metal-binding</keyword>
<keyword id="KW-0498">Mitosis</keyword>
<keyword id="KW-0677">Repeat</keyword>
<sequence>MQKYGSKKIGATSATSSNKQKVQIELTDEQRQEIKEAFDLFDMDGSGKIDAKELKVAMRALGFEPKKEEIKKMISGIDNGSGKIDFNDFLQLMTAKMSEKDSHAEIMKAFRLFDEDDSGFITFANLKRVAKDLGENMTDEELREMIEEADRSNQGQISKEDFLRIMKKTNLF</sequence>